<proteinExistence type="evidence at protein level"/>
<name>Y3090_MYCTU</name>
<gene>
    <name evidence="4" type="ordered locus">Rv3090</name>
</gene>
<dbReference type="EC" id="3.4.-.-" evidence="2"/>
<dbReference type="EMBL" id="AL123456">
    <property type="protein sequence ID" value="CCP45899.1"/>
    <property type="molecule type" value="Genomic_DNA"/>
</dbReference>
<dbReference type="RefSeq" id="NP_217606.1">
    <property type="nucleotide sequence ID" value="NC_000962.3"/>
</dbReference>
<dbReference type="RefSeq" id="WP_003416086.1">
    <property type="nucleotide sequence ID" value="NZ_NVQJ01000011.1"/>
</dbReference>
<dbReference type="SMR" id="O05769"/>
<dbReference type="STRING" id="83332.Rv3090"/>
<dbReference type="PaxDb" id="83332-Rv3090"/>
<dbReference type="DNASU" id="888668"/>
<dbReference type="GeneID" id="888668"/>
<dbReference type="KEGG" id="mtu:Rv3090"/>
<dbReference type="KEGG" id="mtv:RVBD_3090"/>
<dbReference type="PATRIC" id="fig|83332.111.peg.3443"/>
<dbReference type="TubercuList" id="Rv3090"/>
<dbReference type="eggNOG" id="COG0330">
    <property type="taxonomic scope" value="Bacteria"/>
</dbReference>
<dbReference type="InParanoid" id="O05769"/>
<dbReference type="OrthoDB" id="4570918at2"/>
<dbReference type="Proteomes" id="UP000001584">
    <property type="component" value="Chromosome"/>
</dbReference>
<dbReference type="GO" id="GO:0005576">
    <property type="term" value="C:extracellular region"/>
    <property type="evidence" value="ECO:0007005"/>
    <property type="project" value="MTBBASE"/>
</dbReference>
<dbReference type="GO" id="GO:0005886">
    <property type="term" value="C:plasma membrane"/>
    <property type="evidence" value="ECO:0007005"/>
    <property type="project" value="MTBBASE"/>
</dbReference>
<dbReference type="GO" id="GO:0008233">
    <property type="term" value="F:peptidase activity"/>
    <property type="evidence" value="ECO:0007669"/>
    <property type="project" value="UniProtKB-KW"/>
</dbReference>
<dbReference type="GO" id="GO:0006508">
    <property type="term" value="P:proteolysis"/>
    <property type="evidence" value="ECO:0007669"/>
    <property type="project" value="UniProtKB-KW"/>
</dbReference>
<dbReference type="InterPro" id="IPR001107">
    <property type="entry name" value="Band_7"/>
</dbReference>
<dbReference type="Pfam" id="PF01145">
    <property type="entry name" value="Band_7"/>
    <property type="match status" value="1"/>
</dbReference>
<comment type="function">
    <text evidence="2">Protease that triggers late cell apoptosis and contributes to the pathogenicity and dissemination of M.tuberculosis (PubMed:36402348). In a mouse model of infection, can induce hepatocyte and lung cell apoptosis and cause pathological damage to the spleen, liver and lungs (PubMed:36402348). Specifically stimulates the secretion of inflammatory cytokines including TNF-alpha, IL-6 and IL-1 beta (PubMed:36402348). Can degrade casein in vitro (PubMed:36402348).</text>
</comment>
<comment type="subcellular location">
    <subcellularLocation>
        <location evidence="2">Cell membrane</location>
        <topology evidence="1">Multi-pass membrane protein</topology>
    </subcellularLocation>
    <subcellularLocation>
        <location evidence="2">Secreted</location>
        <location evidence="2">Cell wall</location>
    </subcellularLocation>
</comment>
<protein>
    <recommendedName>
        <fullName evidence="3">Protease Rv3090</fullName>
        <ecNumber evidence="2">3.4.-.-</ecNumber>
    </recommendedName>
</protein>
<sequence length="295" mass="32271">MTWQIVFVVICVIVAGVAALFWRLPSDDTTRSRAKTVTIAAVAAAAVFFFLGCFTIVGTRQFAIMTTFGRPTGVSLNNGFHGKWPWQMTHPMDGAVQIDKYVKEGNTDQRITVRLGNQSTALADVSIRWQLKQAAAPELFQQYKTFDNVRVNLIERNLSVALNEVFAGFNPLDPRNLDVSPLPSLAKRAADILRQDVGGQVDIFDVNVPTIQYDQSTEDKINQLNQQRAQTSIALEAQRTAEAQAKANEILSRSISDDPNVVVQNCITAAINKGISPLGCWPGSSALPTIAVPGR</sequence>
<organism>
    <name type="scientific">Mycobacterium tuberculosis (strain ATCC 25618 / H37Rv)</name>
    <dbReference type="NCBI Taxonomy" id="83332"/>
    <lineage>
        <taxon>Bacteria</taxon>
        <taxon>Bacillati</taxon>
        <taxon>Actinomycetota</taxon>
        <taxon>Actinomycetes</taxon>
        <taxon>Mycobacteriales</taxon>
        <taxon>Mycobacteriaceae</taxon>
        <taxon>Mycobacterium</taxon>
        <taxon>Mycobacterium tuberculosis complex</taxon>
    </lineage>
</organism>
<keyword id="KW-1003">Cell membrane</keyword>
<keyword id="KW-0134">Cell wall</keyword>
<keyword id="KW-0378">Hydrolase</keyword>
<keyword id="KW-0472">Membrane</keyword>
<keyword id="KW-0645">Protease</keyword>
<keyword id="KW-1185">Reference proteome</keyword>
<keyword id="KW-0964">Secreted</keyword>
<keyword id="KW-0812">Transmembrane</keyword>
<keyword id="KW-1133">Transmembrane helix</keyword>
<keyword id="KW-0843">Virulence</keyword>
<reference key="1">
    <citation type="journal article" date="1998" name="Nature">
        <title>Deciphering the biology of Mycobacterium tuberculosis from the complete genome sequence.</title>
        <authorList>
            <person name="Cole S.T."/>
            <person name="Brosch R."/>
            <person name="Parkhill J."/>
            <person name="Garnier T."/>
            <person name="Churcher C.M."/>
            <person name="Harris D.E."/>
            <person name="Gordon S.V."/>
            <person name="Eiglmeier K."/>
            <person name="Gas S."/>
            <person name="Barry C.E. III"/>
            <person name="Tekaia F."/>
            <person name="Badcock K."/>
            <person name="Basham D."/>
            <person name="Brown D."/>
            <person name="Chillingworth T."/>
            <person name="Connor R."/>
            <person name="Davies R.M."/>
            <person name="Devlin K."/>
            <person name="Feltwell T."/>
            <person name="Gentles S."/>
            <person name="Hamlin N."/>
            <person name="Holroyd S."/>
            <person name="Hornsby T."/>
            <person name="Jagels K."/>
            <person name="Krogh A."/>
            <person name="McLean J."/>
            <person name="Moule S."/>
            <person name="Murphy L.D."/>
            <person name="Oliver S."/>
            <person name="Osborne J."/>
            <person name="Quail M.A."/>
            <person name="Rajandream M.A."/>
            <person name="Rogers J."/>
            <person name="Rutter S."/>
            <person name="Seeger K."/>
            <person name="Skelton S."/>
            <person name="Squares S."/>
            <person name="Squares R."/>
            <person name="Sulston J.E."/>
            <person name="Taylor K."/>
            <person name="Whitehead S."/>
            <person name="Barrell B.G."/>
        </authorList>
    </citation>
    <scope>NUCLEOTIDE SEQUENCE [LARGE SCALE GENOMIC DNA]</scope>
    <source>
        <strain>ATCC 25618 / H37Rv</strain>
    </source>
</reference>
<reference key="2">
    <citation type="journal article" date="2011" name="Mol. Cell. Proteomics">
        <title>Proteogenomic analysis of Mycobacterium tuberculosis by high resolution mass spectrometry.</title>
        <authorList>
            <person name="Kelkar D.S."/>
            <person name="Kumar D."/>
            <person name="Kumar P."/>
            <person name="Balakrishnan L."/>
            <person name="Muthusamy B."/>
            <person name="Yadav A.K."/>
            <person name="Shrivastava P."/>
            <person name="Marimuthu A."/>
            <person name="Anand S."/>
            <person name="Sundaram H."/>
            <person name="Kingsbury R."/>
            <person name="Harsha H.C."/>
            <person name="Nair B."/>
            <person name="Prasad T.S."/>
            <person name="Chauhan D.S."/>
            <person name="Katoch K."/>
            <person name="Katoch V.M."/>
            <person name="Kumar P."/>
            <person name="Chaerkady R."/>
            <person name="Ramachandran S."/>
            <person name="Dash D."/>
            <person name="Pandey A."/>
        </authorList>
    </citation>
    <scope>IDENTIFICATION BY MASS SPECTROMETRY [LARGE SCALE ANALYSIS]</scope>
    <source>
        <strain>ATCC 25618 / H37Rv</strain>
    </source>
</reference>
<reference key="3">
    <citation type="journal article" date="2022" name="Microb. Pathog.">
        <title>Mycobacterium tuberculosis protease Rv3090 is associated with late cell apoptosis and participates in organ injuries and mycobacterial dissemination in mice.</title>
        <authorList>
            <person name="Cui Y."/>
            <person name="Tang Y."/>
            <person name="Shao M."/>
            <person name="Zang X."/>
            <person name="Jiang Y."/>
            <person name="Cui Z."/>
            <person name="Dang G."/>
            <person name="Liu S."/>
        </authorList>
    </citation>
    <scope>FUNCTION</scope>
    <scope>SUBCELLULAR LOCATION</scope>
    <source>
        <strain>H37Rv</strain>
    </source>
</reference>
<feature type="chain" id="PRO_0000458112" description="Protease Rv3090">
    <location>
        <begin position="1"/>
        <end position="295"/>
    </location>
</feature>
<feature type="transmembrane region" description="Helical" evidence="1">
    <location>
        <begin position="2"/>
        <end position="22"/>
    </location>
</feature>
<feature type="transmembrane region" description="Helical" evidence="1">
    <location>
        <begin position="37"/>
        <end position="57"/>
    </location>
</feature>
<evidence type="ECO:0000255" key="1"/>
<evidence type="ECO:0000269" key="2">
    <source>
    </source>
</evidence>
<evidence type="ECO:0000303" key="3">
    <source>
    </source>
</evidence>
<evidence type="ECO:0000312" key="4">
    <source>
        <dbReference type="EMBL" id="CCP45899.1"/>
    </source>
</evidence>
<accession>O05769</accession>
<accession>F2GNX8</accession>
<accession>I6X680</accession>